<accession>A1V116</accession>
<organism>
    <name type="scientific">Burkholderia mallei (strain SAVP1)</name>
    <dbReference type="NCBI Taxonomy" id="320388"/>
    <lineage>
        <taxon>Bacteria</taxon>
        <taxon>Pseudomonadati</taxon>
        <taxon>Pseudomonadota</taxon>
        <taxon>Betaproteobacteria</taxon>
        <taxon>Burkholderiales</taxon>
        <taxon>Burkholderiaceae</taxon>
        <taxon>Burkholderia</taxon>
        <taxon>pseudomallei group</taxon>
    </lineage>
</organism>
<name>KDSB_BURMS</name>
<comment type="function">
    <text evidence="1">Activates KDO (a required 8-carbon sugar) for incorporation into bacterial lipopolysaccharide in Gram-negative bacteria.</text>
</comment>
<comment type="catalytic activity">
    <reaction evidence="1">
        <text>3-deoxy-alpha-D-manno-oct-2-ulosonate + CTP = CMP-3-deoxy-beta-D-manno-octulosonate + diphosphate</text>
        <dbReference type="Rhea" id="RHEA:23448"/>
        <dbReference type="ChEBI" id="CHEBI:33019"/>
        <dbReference type="ChEBI" id="CHEBI:37563"/>
        <dbReference type="ChEBI" id="CHEBI:85986"/>
        <dbReference type="ChEBI" id="CHEBI:85987"/>
        <dbReference type="EC" id="2.7.7.38"/>
    </reaction>
</comment>
<comment type="pathway">
    <text evidence="1">Nucleotide-sugar biosynthesis; CMP-3-deoxy-D-manno-octulosonate biosynthesis; CMP-3-deoxy-D-manno-octulosonate from 3-deoxy-D-manno-octulosonate and CTP: step 1/1.</text>
</comment>
<comment type="pathway">
    <text evidence="1">Bacterial outer membrane biogenesis; lipopolysaccharide biosynthesis.</text>
</comment>
<comment type="subcellular location">
    <subcellularLocation>
        <location evidence="1">Cytoplasm</location>
    </subcellularLocation>
</comment>
<comment type="similarity">
    <text evidence="1">Belongs to the KdsB family.</text>
</comment>
<feature type="chain" id="PRO_0000370030" description="3-deoxy-manno-octulosonate cytidylyltransferase">
    <location>
        <begin position="1"/>
        <end position="263"/>
    </location>
</feature>
<reference key="1">
    <citation type="journal article" date="2010" name="Genome Biol. Evol.">
        <title>Continuing evolution of Burkholderia mallei through genome reduction and large-scale rearrangements.</title>
        <authorList>
            <person name="Losada L."/>
            <person name="Ronning C.M."/>
            <person name="DeShazer D."/>
            <person name="Woods D."/>
            <person name="Fedorova N."/>
            <person name="Kim H.S."/>
            <person name="Shabalina S.A."/>
            <person name="Pearson T.R."/>
            <person name="Brinkac L."/>
            <person name="Tan P."/>
            <person name="Nandi T."/>
            <person name="Crabtree J."/>
            <person name="Badger J."/>
            <person name="Beckstrom-Sternberg S."/>
            <person name="Saqib M."/>
            <person name="Schutzer S.E."/>
            <person name="Keim P."/>
            <person name="Nierman W.C."/>
        </authorList>
    </citation>
    <scope>NUCLEOTIDE SEQUENCE [LARGE SCALE GENOMIC DNA]</scope>
    <source>
        <strain>SAVP1</strain>
    </source>
</reference>
<dbReference type="EC" id="2.7.7.38" evidence="1"/>
<dbReference type="EMBL" id="CP000526">
    <property type="protein sequence ID" value="ABM49705.1"/>
    <property type="molecule type" value="Genomic_DNA"/>
</dbReference>
<dbReference type="RefSeq" id="WP_004185994.1">
    <property type="nucleotide sequence ID" value="NC_008785.1"/>
</dbReference>
<dbReference type="SMR" id="A1V116"/>
<dbReference type="GeneID" id="92979969"/>
<dbReference type="KEGG" id="bmv:BMASAVP1_A0571"/>
<dbReference type="HOGENOM" id="CLU_065038_1_0_4"/>
<dbReference type="UniPathway" id="UPA00030"/>
<dbReference type="UniPathway" id="UPA00358">
    <property type="reaction ID" value="UER00476"/>
</dbReference>
<dbReference type="GO" id="GO:0005829">
    <property type="term" value="C:cytosol"/>
    <property type="evidence" value="ECO:0007669"/>
    <property type="project" value="TreeGrafter"/>
</dbReference>
<dbReference type="GO" id="GO:0008690">
    <property type="term" value="F:3-deoxy-manno-octulosonate cytidylyltransferase activity"/>
    <property type="evidence" value="ECO:0007669"/>
    <property type="project" value="UniProtKB-UniRule"/>
</dbReference>
<dbReference type="GO" id="GO:0033468">
    <property type="term" value="P:CMP-keto-3-deoxy-D-manno-octulosonic acid biosynthetic process"/>
    <property type="evidence" value="ECO:0007669"/>
    <property type="project" value="UniProtKB-UniRule"/>
</dbReference>
<dbReference type="GO" id="GO:0009103">
    <property type="term" value="P:lipopolysaccharide biosynthetic process"/>
    <property type="evidence" value="ECO:0007669"/>
    <property type="project" value="UniProtKB-UniRule"/>
</dbReference>
<dbReference type="CDD" id="cd02517">
    <property type="entry name" value="CMP-KDO-Synthetase"/>
    <property type="match status" value="1"/>
</dbReference>
<dbReference type="FunFam" id="3.90.550.10:FF:000011">
    <property type="entry name" value="3-deoxy-manno-octulosonate cytidylyltransferase"/>
    <property type="match status" value="1"/>
</dbReference>
<dbReference type="Gene3D" id="3.90.550.10">
    <property type="entry name" value="Spore Coat Polysaccharide Biosynthesis Protein SpsA, Chain A"/>
    <property type="match status" value="1"/>
</dbReference>
<dbReference type="HAMAP" id="MF_00057">
    <property type="entry name" value="KdsB"/>
    <property type="match status" value="1"/>
</dbReference>
<dbReference type="InterPro" id="IPR003329">
    <property type="entry name" value="Cytidylyl_trans"/>
</dbReference>
<dbReference type="InterPro" id="IPR004528">
    <property type="entry name" value="KdsB"/>
</dbReference>
<dbReference type="InterPro" id="IPR029044">
    <property type="entry name" value="Nucleotide-diphossugar_trans"/>
</dbReference>
<dbReference type="NCBIfam" id="TIGR00466">
    <property type="entry name" value="kdsB"/>
    <property type="match status" value="1"/>
</dbReference>
<dbReference type="NCBIfam" id="NF003950">
    <property type="entry name" value="PRK05450.1-3"/>
    <property type="match status" value="1"/>
</dbReference>
<dbReference type="NCBIfam" id="NF003952">
    <property type="entry name" value="PRK05450.1-5"/>
    <property type="match status" value="1"/>
</dbReference>
<dbReference type="NCBIfam" id="NF009905">
    <property type="entry name" value="PRK13368.1"/>
    <property type="match status" value="1"/>
</dbReference>
<dbReference type="PANTHER" id="PTHR42866">
    <property type="entry name" value="3-DEOXY-MANNO-OCTULOSONATE CYTIDYLYLTRANSFERASE"/>
    <property type="match status" value="1"/>
</dbReference>
<dbReference type="PANTHER" id="PTHR42866:SF2">
    <property type="entry name" value="3-DEOXY-MANNO-OCTULOSONATE CYTIDYLYLTRANSFERASE, MITOCHONDRIAL"/>
    <property type="match status" value="1"/>
</dbReference>
<dbReference type="Pfam" id="PF02348">
    <property type="entry name" value="CTP_transf_3"/>
    <property type="match status" value="1"/>
</dbReference>
<dbReference type="SUPFAM" id="SSF53448">
    <property type="entry name" value="Nucleotide-diphospho-sugar transferases"/>
    <property type="match status" value="1"/>
</dbReference>
<gene>
    <name evidence="1" type="primary">kdsB</name>
    <name type="ordered locus">BMASAVP1_A0571</name>
</gene>
<evidence type="ECO:0000255" key="1">
    <source>
        <dbReference type="HAMAP-Rule" id="MF_00057"/>
    </source>
</evidence>
<sequence>MTSPLPFVAVVPARLASTRLPNKPLADLGGKPMVVRVAERAREAGAQQVLVASDAQRVLDAVREHGFDAVLTRADHPSGTDRLAEVAAKLGFDDDTIVVNVQGDEPLIDPQLVRDVASHLAAHPSCAIATAAHPIHEAHEVFNPNYVKVVLDAHGVALYFSRAPIPWSRDAYLPHWPNVAAMPAPTCPVYRHIGLYAYRARFLRTYPTLAQAPIEAAEQLEQLRAMWHGERIAVRVTEHAPEAGIDTPADLERVQALFRSRAK</sequence>
<keyword id="KW-0963">Cytoplasm</keyword>
<keyword id="KW-0448">Lipopolysaccharide biosynthesis</keyword>
<keyword id="KW-0548">Nucleotidyltransferase</keyword>
<keyword id="KW-0808">Transferase</keyword>
<proteinExistence type="inferred from homology"/>
<protein>
    <recommendedName>
        <fullName evidence="1">3-deoxy-manno-octulosonate cytidylyltransferase</fullName>
        <ecNumber evidence="1">2.7.7.38</ecNumber>
    </recommendedName>
    <alternativeName>
        <fullName evidence="1">CMP-2-keto-3-deoxyoctulosonic acid synthase</fullName>
        <shortName evidence="1">CKS</shortName>
        <shortName evidence="1">CMP-KDO synthase</shortName>
    </alternativeName>
</protein>